<accession>P04728</accession>
<proteinExistence type="evidence at transcript level"/>
<evidence type="ECO:0000250" key="1"/>
<evidence type="ECO:0000256" key="2">
    <source>
        <dbReference type="SAM" id="MobiDB-lite"/>
    </source>
</evidence>
<evidence type="ECO:0000305" key="3"/>
<feature type="chain" id="PRO_0000102597" description="Alpha/beta-gliadin clone PTO-A10">
    <location>
        <begin position="1" status="less than"/>
        <end position="186"/>
    </location>
</feature>
<feature type="region of interest" description="Disordered" evidence="2">
    <location>
        <begin position="1"/>
        <end position="20"/>
    </location>
</feature>
<feature type="non-terminal residue">
    <location>
        <position position="1"/>
    </location>
</feature>
<organism>
    <name type="scientific">Triticum aestivum</name>
    <name type="common">Wheat</name>
    <dbReference type="NCBI Taxonomy" id="4565"/>
    <lineage>
        <taxon>Eukaryota</taxon>
        <taxon>Viridiplantae</taxon>
        <taxon>Streptophyta</taxon>
        <taxon>Embryophyta</taxon>
        <taxon>Tracheophyta</taxon>
        <taxon>Spermatophyta</taxon>
        <taxon>Magnoliopsida</taxon>
        <taxon>Liliopsida</taxon>
        <taxon>Poales</taxon>
        <taxon>Poaceae</taxon>
        <taxon>BOP clade</taxon>
        <taxon>Pooideae</taxon>
        <taxon>Triticodae</taxon>
        <taxon>Triticeae</taxon>
        <taxon>Triticinae</taxon>
        <taxon>Triticum</taxon>
    </lineage>
</organism>
<protein>
    <recommendedName>
        <fullName>Alpha/beta-gliadin clone PTO-A10</fullName>
    </recommendedName>
    <alternativeName>
        <fullName>Prolamin</fullName>
    </alternativeName>
</protein>
<reference key="1">
    <citation type="journal article" date="1984" name="Proc. Natl. Acad. Sci. U.S.A.">
        <title>Nucleic acid (cDNA) and amino acid sequences of alpha-type gliadins from wheat (Triticum aestivum).</title>
        <authorList>
            <person name="Kasarda D.D."/>
            <person name="Okita T.W."/>
            <person name="Bernardin J.E."/>
            <person name="Baecker P.A."/>
            <person name="Nimmo C.C."/>
            <person name="Lew E.J.-L."/>
            <person name="Dietler M.D."/>
            <person name="Greene F.C."/>
        </authorList>
    </citation>
    <scope>NUCLEOTIDE SEQUENCE [MRNA]</scope>
</reference>
<sequence>PQPQPQYSQPQQPISQQQQQQQQQQQQQQQEQQILQQILQQQLIPCMDVVLQQHNIAHGRSQVLQQSTYQLLQELCCQHLWQIPEQSQCQAIHNVVHAIILHQQQQKQQQQPSSQFSFQQPLQQYPLGQGSFRPSQQNPQAQGSVQPQQLPQFEIRNLALQTLPAMCNVYIPPYCTIAPFGIFGTN</sequence>
<comment type="function">
    <text>Gliadin is the major seed storage protein in wheat.</text>
</comment>
<comment type="PTM">
    <text evidence="1">Substrate of transglutaminase.</text>
</comment>
<comment type="allergen">
    <text evidence="1">Causes an allergic reaction in human. Is the cause of the celiac disease, also known as celiac sprue or gluten-sensitive enteropathy (By similarity).</text>
</comment>
<comment type="miscellaneous">
    <text>The alpha/beta-gliadins can be divided into 5 homology classes. Sequence divergence between the classes is due to single base substitutions and to duplications or deletions within or near direct repeats. There are more than a 100 copies of the gene for alpha/beta-gliadin per haploid genome.</text>
</comment>
<comment type="similarity">
    <text evidence="3">Belongs to the gliadin/glutenin family.</text>
</comment>
<dbReference type="EMBL" id="K02069">
    <property type="protein sequence ID" value="AAA34284.1"/>
    <property type="molecule type" value="mRNA"/>
</dbReference>
<dbReference type="Proteomes" id="UP000019116">
    <property type="component" value="Unplaced"/>
</dbReference>
<dbReference type="ExpressionAtlas" id="P04728">
    <property type="expression patterns" value="baseline"/>
</dbReference>
<dbReference type="GO" id="GO:0045735">
    <property type="term" value="F:nutrient reservoir activity"/>
    <property type="evidence" value="ECO:0007669"/>
    <property type="project" value="UniProtKB-KW"/>
</dbReference>
<dbReference type="Gene3D" id="1.10.110.10">
    <property type="entry name" value="Plant lipid-transfer and hydrophobic proteins"/>
    <property type="match status" value="1"/>
</dbReference>
<dbReference type="InterPro" id="IPR036312">
    <property type="entry name" value="Bifun_inhib/LTP/seed_sf"/>
</dbReference>
<dbReference type="InterPro" id="IPR016140">
    <property type="entry name" value="Bifunc_inhib/LTP/seed_store"/>
</dbReference>
<dbReference type="InterPro" id="IPR001954">
    <property type="entry name" value="Glia_glutenin"/>
</dbReference>
<dbReference type="PANTHER" id="PTHR33454:SF7">
    <property type="entry name" value="ALPHA_BETA-GLIADIN MM1"/>
    <property type="match status" value="1"/>
</dbReference>
<dbReference type="PANTHER" id="PTHR33454">
    <property type="entry name" value="PROLAMIN PPROL 14P"/>
    <property type="match status" value="1"/>
</dbReference>
<dbReference type="Pfam" id="PF13016">
    <property type="entry name" value="Gliadin"/>
    <property type="match status" value="1"/>
</dbReference>
<dbReference type="PRINTS" id="PR00208">
    <property type="entry name" value="GLIADGLUTEN"/>
</dbReference>
<dbReference type="SMART" id="SM00499">
    <property type="entry name" value="AAI"/>
    <property type="match status" value="1"/>
</dbReference>
<dbReference type="SUPFAM" id="SSF47699">
    <property type="entry name" value="Bifunctional inhibitor/lipid-transfer protein/seed storage 2S albumin"/>
    <property type="match status" value="1"/>
</dbReference>
<keyword id="KW-0020">Allergen</keyword>
<keyword id="KW-1185">Reference proteome</keyword>
<keyword id="KW-0677">Repeat</keyword>
<keyword id="KW-0708">Seed storage protein</keyword>
<keyword id="KW-0758">Storage protein</keyword>
<name>GDA8_WHEAT</name>